<proteinExistence type="evidence at transcript level"/>
<keyword id="KW-0217">Developmental protein</keyword>
<keyword id="KW-0238">DNA-binding</keyword>
<keyword id="KW-0371">Homeobox</keyword>
<keyword id="KW-0539">Nucleus</keyword>
<keyword id="KW-1185">Reference proteome</keyword>
<keyword id="KW-0804">Transcription</keyword>
<keyword id="KW-0805">Transcription regulation</keyword>
<keyword id="KW-0879">Wnt signaling pathway</keyword>
<sequence length="292" mass="31706">MGDGGAERDRGPKRREEPGGRSGCRGEHRGAEDLRADTGSTSPREIAGTSASSPAGSRESGGDSDGQQALGETDHCRRILVRDAKGTIREIVLPKGLDLDRPKRTRTSFTAEQLYRLEMEFQRCQYVVGRERTELARQLNLSETQVKVWFQNRRTKQKKDQSRDLEKRASSSAFEAFATSNVLRLLEQGRLLSVPRAPSLLALSPGLPGLTAGHRGTSLGDPRNSSQRLNPMPSASASSPLPPPLPAVCFSAAPLLDLPASYKLGSSAFEPYSRLEQQKVGSPGQSDKKADI</sequence>
<protein>
    <recommendedName>
        <fullName>Ventral anterior homeobox 2</fullName>
    </recommendedName>
</protein>
<dbReference type="EMBL" id="AF113516">
    <property type="protein sequence ID" value="AAF25691.1"/>
    <property type="molecule type" value="mRNA"/>
</dbReference>
<dbReference type="RefSeq" id="NP_072159.1">
    <property type="nucleotide sequence ID" value="NM_022637.1"/>
</dbReference>
<dbReference type="SMR" id="Q9JLZ9"/>
<dbReference type="FunCoup" id="Q9JLZ9">
    <property type="interactions" value="108"/>
</dbReference>
<dbReference type="STRING" id="10116.ENSRNOP00000018128"/>
<dbReference type="PhosphoSitePlus" id="Q9JLZ9"/>
<dbReference type="PaxDb" id="10116-ENSRNOP00000018128"/>
<dbReference type="GeneID" id="64572"/>
<dbReference type="KEGG" id="rno:64572"/>
<dbReference type="UCSC" id="RGD:621133">
    <property type="organism name" value="rat"/>
</dbReference>
<dbReference type="AGR" id="RGD:621133"/>
<dbReference type="CTD" id="25806"/>
<dbReference type="RGD" id="621133">
    <property type="gene designation" value="Vax2"/>
</dbReference>
<dbReference type="eggNOG" id="KOG0843">
    <property type="taxonomic scope" value="Eukaryota"/>
</dbReference>
<dbReference type="InParanoid" id="Q9JLZ9"/>
<dbReference type="PhylomeDB" id="Q9JLZ9"/>
<dbReference type="PRO" id="PR:Q9JLZ9"/>
<dbReference type="Proteomes" id="UP000002494">
    <property type="component" value="Unplaced"/>
</dbReference>
<dbReference type="GO" id="GO:0005737">
    <property type="term" value="C:cytoplasm"/>
    <property type="evidence" value="ECO:0000266"/>
    <property type="project" value="RGD"/>
</dbReference>
<dbReference type="GO" id="GO:0005634">
    <property type="term" value="C:nucleus"/>
    <property type="evidence" value="ECO:0000266"/>
    <property type="project" value="RGD"/>
</dbReference>
<dbReference type="GO" id="GO:0031490">
    <property type="term" value="F:chromatin DNA binding"/>
    <property type="evidence" value="ECO:0000266"/>
    <property type="project" value="RGD"/>
</dbReference>
<dbReference type="GO" id="GO:0000981">
    <property type="term" value="F:DNA-binding transcription factor activity, RNA polymerase II-specific"/>
    <property type="evidence" value="ECO:0000318"/>
    <property type="project" value="GO_Central"/>
</dbReference>
<dbReference type="GO" id="GO:0001227">
    <property type="term" value="F:DNA-binding transcription repressor activity, RNA polymerase II-specific"/>
    <property type="evidence" value="ECO:0000266"/>
    <property type="project" value="RGD"/>
</dbReference>
<dbReference type="GO" id="GO:0000978">
    <property type="term" value="F:RNA polymerase II cis-regulatory region sequence-specific DNA binding"/>
    <property type="evidence" value="ECO:0000318"/>
    <property type="project" value="GO_Central"/>
</dbReference>
<dbReference type="GO" id="GO:0001162">
    <property type="term" value="F:RNA polymerase II intronic transcription regulatory region sequence-specific DNA binding"/>
    <property type="evidence" value="ECO:0000266"/>
    <property type="project" value="RGD"/>
</dbReference>
<dbReference type="GO" id="GO:1990837">
    <property type="term" value="F:sequence-specific double-stranded DNA binding"/>
    <property type="evidence" value="ECO:0000266"/>
    <property type="project" value="RGD"/>
</dbReference>
<dbReference type="GO" id="GO:0007409">
    <property type="term" value="P:axonogenesis"/>
    <property type="evidence" value="ECO:0000266"/>
    <property type="project" value="RGD"/>
</dbReference>
<dbReference type="GO" id="GO:0007420">
    <property type="term" value="P:brain development"/>
    <property type="evidence" value="ECO:0000318"/>
    <property type="project" value="GO_Central"/>
</dbReference>
<dbReference type="GO" id="GO:0043010">
    <property type="term" value="P:camera-type eye development"/>
    <property type="evidence" value="ECO:0000266"/>
    <property type="project" value="RGD"/>
</dbReference>
<dbReference type="GO" id="GO:0007417">
    <property type="term" value="P:central nervous system development"/>
    <property type="evidence" value="ECO:0000318"/>
    <property type="project" value="GO_Central"/>
</dbReference>
<dbReference type="GO" id="GO:0009950">
    <property type="term" value="P:dorsal/ventral axis specification"/>
    <property type="evidence" value="ECO:0000266"/>
    <property type="project" value="RGD"/>
</dbReference>
<dbReference type="GO" id="GO:0048048">
    <property type="term" value="P:embryonic eye morphogenesis"/>
    <property type="evidence" value="ECO:0000266"/>
    <property type="project" value="RGD"/>
</dbReference>
<dbReference type="GO" id="GO:0030900">
    <property type="term" value="P:forebrain development"/>
    <property type="evidence" value="ECO:0000250"/>
    <property type="project" value="UniProtKB"/>
</dbReference>
<dbReference type="GO" id="GO:0000122">
    <property type="term" value="P:negative regulation of transcription by RNA polymerase II"/>
    <property type="evidence" value="ECO:0000266"/>
    <property type="project" value="RGD"/>
</dbReference>
<dbReference type="GO" id="GO:0030182">
    <property type="term" value="P:neuron differentiation"/>
    <property type="evidence" value="ECO:0000318"/>
    <property type="project" value="GO_Central"/>
</dbReference>
<dbReference type="GO" id="GO:0006357">
    <property type="term" value="P:regulation of transcription by RNA polymerase II"/>
    <property type="evidence" value="ECO:0000318"/>
    <property type="project" value="GO_Central"/>
</dbReference>
<dbReference type="GO" id="GO:0060041">
    <property type="term" value="P:retina development in camera-type eye"/>
    <property type="evidence" value="ECO:0000266"/>
    <property type="project" value="RGD"/>
</dbReference>
<dbReference type="GO" id="GO:0016055">
    <property type="term" value="P:Wnt signaling pathway"/>
    <property type="evidence" value="ECO:0007669"/>
    <property type="project" value="UniProtKB-KW"/>
</dbReference>
<dbReference type="CDD" id="cd00086">
    <property type="entry name" value="homeodomain"/>
    <property type="match status" value="1"/>
</dbReference>
<dbReference type="FunFam" id="1.10.10.60:FF:000131">
    <property type="entry name" value="Ventral anterior homeobox 2"/>
    <property type="match status" value="1"/>
</dbReference>
<dbReference type="Gene3D" id="1.10.10.60">
    <property type="entry name" value="Homeodomain-like"/>
    <property type="match status" value="1"/>
</dbReference>
<dbReference type="InterPro" id="IPR050877">
    <property type="entry name" value="EMX-VAX-Noto_Homeobox_TFs"/>
</dbReference>
<dbReference type="InterPro" id="IPR001356">
    <property type="entry name" value="HD"/>
</dbReference>
<dbReference type="InterPro" id="IPR020479">
    <property type="entry name" value="HD_metazoa"/>
</dbReference>
<dbReference type="InterPro" id="IPR017970">
    <property type="entry name" value="Homeobox_CS"/>
</dbReference>
<dbReference type="InterPro" id="IPR009057">
    <property type="entry name" value="Homeodomain-like_sf"/>
</dbReference>
<dbReference type="InterPro" id="IPR000047">
    <property type="entry name" value="HTH_motif"/>
</dbReference>
<dbReference type="PANTHER" id="PTHR24339">
    <property type="entry name" value="HOMEOBOX PROTEIN EMX-RELATED"/>
    <property type="match status" value="1"/>
</dbReference>
<dbReference type="PANTHER" id="PTHR24339:SF34">
    <property type="entry name" value="VENTRAL ANTERIOR HOMEOBOX 2"/>
    <property type="match status" value="1"/>
</dbReference>
<dbReference type="Pfam" id="PF00046">
    <property type="entry name" value="Homeodomain"/>
    <property type="match status" value="1"/>
</dbReference>
<dbReference type="PRINTS" id="PR00024">
    <property type="entry name" value="HOMEOBOX"/>
</dbReference>
<dbReference type="PRINTS" id="PR00031">
    <property type="entry name" value="HTHREPRESSR"/>
</dbReference>
<dbReference type="SMART" id="SM00389">
    <property type="entry name" value="HOX"/>
    <property type="match status" value="1"/>
</dbReference>
<dbReference type="SUPFAM" id="SSF46689">
    <property type="entry name" value="Homeodomain-like"/>
    <property type="match status" value="1"/>
</dbReference>
<dbReference type="PROSITE" id="PS00027">
    <property type="entry name" value="HOMEOBOX_1"/>
    <property type="match status" value="1"/>
</dbReference>
<dbReference type="PROSITE" id="PS50071">
    <property type="entry name" value="HOMEOBOX_2"/>
    <property type="match status" value="1"/>
</dbReference>
<gene>
    <name type="primary">Vax2</name>
</gene>
<evidence type="ECO:0000250" key="1"/>
<evidence type="ECO:0000255" key="2">
    <source>
        <dbReference type="PROSITE-ProRule" id="PRU00108"/>
    </source>
</evidence>
<evidence type="ECO:0000256" key="3">
    <source>
        <dbReference type="SAM" id="MobiDB-lite"/>
    </source>
</evidence>
<evidence type="ECO:0000305" key="4"/>
<reference key="1">
    <citation type="submission" date="1998-12" db="EMBL/GenBank/DDBJ databases">
        <title>Rat Vax2: a novel member of the Vax homeobox gene subfamily.</title>
        <authorList>
            <person name="Bertuzzi S."/>
            <person name="Mui S.H."/>
            <person name="Lemke G."/>
        </authorList>
    </citation>
    <scope>NUCLEOTIDE SEQUENCE [MRNA]</scope>
    <source>
        <strain>Sprague-Dawley</strain>
        <tissue>Schwann cell</tissue>
    </source>
</reference>
<feature type="chain" id="PRO_0000049353" description="Ventral anterior homeobox 2">
    <location>
        <begin position="1"/>
        <end position="292"/>
    </location>
</feature>
<feature type="DNA-binding region" description="Homeobox" evidence="2">
    <location>
        <begin position="102"/>
        <end position="161"/>
    </location>
</feature>
<feature type="region of interest" description="Disordered" evidence="3">
    <location>
        <begin position="1"/>
        <end position="74"/>
    </location>
</feature>
<feature type="region of interest" description="Disordered" evidence="3">
    <location>
        <begin position="212"/>
        <end position="241"/>
    </location>
</feature>
<feature type="compositionally biased region" description="Basic and acidic residues" evidence="3">
    <location>
        <begin position="1"/>
        <end position="36"/>
    </location>
</feature>
<feature type="compositionally biased region" description="Polar residues" evidence="3">
    <location>
        <begin position="38"/>
        <end position="55"/>
    </location>
</feature>
<name>VAX2_RAT</name>
<accession>Q9JLZ9</accession>
<comment type="function">
    <text evidence="1">Transcription factor that may function in dorsoventral specification of the forebrain. Regulates the expression of Wnt signaling antagonists including the expression of a truncated TCF7L2 isoform that cannot bind CTNNB1 and acts therefore as a potent dominant-negative Wnt antagonist. Plays a crucial role in eye development and, in particular, in the specification of the ventral optic vesicle (By similarity). May be a regulator of axial polarization in the retina.</text>
</comment>
<comment type="subcellular location">
    <subcellularLocation>
        <location evidence="4">Nucleus</location>
    </subcellularLocation>
</comment>
<comment type="similarity">
    <text evidence="4">Belongs to the EMX homeobox family.</text>
</comment>
<organism>
    <name type="scientific">Rattus norvegicus</name>
    <name type="common">Rat</name>
    <dbReference type="NCBI Taxonomy" id="10116"/>
    <lineage>
        <taxon>Eukaryota</taxon>
        <taxon>Metazoa</taxon>
        <taxon>Chordata</taxon>
        <taxon>Craniata</taxon>
        <taxon>Vertebrata</taxon>
        <taxon>Euteleostomi</taxon>
        <taxon>Mammalia</taxon>
        <taxon>Eutheria</taxon>
        <taxon>Euarchontoglires</taxon>
        <taxon>Glires</taxon>
        <taxon>Rodentia</taxon>
        <taxon>Myomorpha</taxon>
        <taxon>Muroidea</taxon>
        <taxon>Muridae</taxon>
        <taxon>Murinae</taxon>
        <taxon>Rattus</taxon>
    </lineage>
</organism>